<protein>
    <recommendedName>
        <fullName evidence="1">Protein translocase subunit SecA</fullName>
        <ecNumber evidence="1">7.4.2.8</ecNumber>
    </recommendedName>
</protein>
<feature type="chain" id="PRO_0000321000" description="Protein translocase subunit SecA">
    <location>
        <begin position="1"/>
        <end position="909"/>
    </location>
</feature>
<feature type="region of interest" description="Disordered" evidence="2">
    <location>
        <begin position="863"/>
        <end position="909"/>
    </location>
</feature>
<feature type="compositionally biased region" description="Basic and acidic residues" evidence="2">
    <location>
        <begin position="880"/>
        <end position="889"/>
    </location>
</feature>
<feature type="compositionally biased region" description="Basic residues" evidence="2">
    <location>
        <begin position="899"/>
        <end position="909"/>
    </location>
</feature>
<feature type="binding site" evidence="1">
    <location>
        <position position="87"/>
    </location>
    <ligand>
        <name>ATP</name>
        <dbReference type="ChEBI" id="CHEBI:30616"/>
    </ligand>
</feature>
<feature type="binding site" evidence="1">
    <location>
        <begin position="105"/>
        <end position="109"/>
    </location>
    <ligand>
        <name>ATP</name>
        <dbReference type="ChEBI" id="CHEBI:30616"/>
    </ligand>
</feature>
<feature type="binding site" evidence="1">
    <location>
        <position position="512"/>
    </location>
    <ligand>
        <name>ATP</name>
        <dbReference type="ChEBI" id="CHEBI:30616"/>
    </ligand>
</feature>
<feature type="binding site" evidence="1">
    <location>
        <position position="893"/>
    </location>
    <ligand>
        <name>Zn(2+)</name>
        <dbReference type="ChEBI" id="CHEBI:29105"/>
    </ligand>
</feature>
<feature type="binding site" evidence="1">
    <location>
        <position position="895"/>
    </location>
    <ligand>
        <name>Zn(2+)</name>
        <dbReference type="ChEBI" id="CHEBI:29105"/>
    </ligand>
</feature>
<feature type="binding site" evidence="1">
    <location>
        <position position="904"/>
    </location>
    <ligand>
        <name>Zn(2+)</name>
        <dbReference type="ChEBI" id="CHEBI:29105"/>
    </ligand>
</feature>
<feature type="binding site" evidence="1">
    <location>
        <position position="905"/>
    </location>
    <ligand>
        <name>Zn(2+)</name>
        <dbReference type="ChEBI" id="CHEBI:29105"/>
    </ligand>
</feature>
<sequence>MFGKLLTKVFGSRNDRTLKGLQKVVIKINALEADYEKLTDEELKAKTAEFRERLAAGETLDDIMAEAFATVREASKRVFEMRHFDVQLLGGMVLDSNRIAEMRTGEGKTLTATLPAYLNALTGKGVHVITVNDYLARRDAENNRPLFEFLGLTVGINVAGIGQQEKKAAYNADITYGTNNEFGFDYLRDNMAFSPQDRVQRPLHYALIDEVDSILIDEARTPLIISGAAEDSSELYTKINTLIPNLIRQDKEDSEEYVGEGDYSIDEKAKQVHFTERGQEKVENLLIERGMLAEGDSLYSAANISLLHHVNAALRAHTLFERDVDYIVQDGEVIIVDEHTGRTMPGRRWSEGLHQAVEAKEGVHIQNENQTLASITFQNYFRQYEKLAGMTGTADTEAFEFQHIYGLDTVVVPTNRPMVRKDMADLVYLTANEKYQAIIKDIKDCRERGQPVLVGTVSIEQSELLARLMVQEKIPHQVLNAKFHEKEAEIVAQAGRTGAVTIATNMAGRGTDIVLGGNWNMEIDALDNPTPEQKAKIKADWQVRHDAVVAAGGLHILGTERHESRRIDNQLRGRAGRQGDAGSSRFYLSMEDSLMRIFASDRVSGMMKKLGMEEGEAIEHPWVSRAIENAQRKVEARNFDIRKQLLEFDDVANDQRQVVYAQRNELMDAESIEDTIKNIQDDVIGAVIDQYIPPQSVEELWDVPGLEQRLNQEFMLKLPIQEWLDKEDDLHEESLRERIITSWSDAYKAKEEMVGASVLRQFEKAVMLQTLDGLWKEHLAAMDHLRQGIHLRGYAQKNPKQEYKRESFELFQQLLNTLKHDVISVLSKVQVQAQSDVEEMEARRREEDAKIQRDYQHAAAEALVGGGDEDDESIAAHTPMIRDGDKVGRNDPCPCGSGRKYKQCHGKLS</sequence>
<reference key="1">
    <citation type="submission" date="2006-12" db="EMBL/GenBank/DDBJ databases">
        <title>Complete sequence of Shewanella sp. W3-18-1.</title>
        <authorList>
            <consortium name="US DOE Joint Genome Institute"/>
            <person name="Copeland A."/>
            <person name="Lucas S."/>
            <person name="Lapidus A."/>
            <person name="Barry K."/>
            <person name="Detter J.C."/>
            <person name="Glavina del Rio T."/>
            <person name="Hammon N."/>
            <person name="Israni S."/>
            <person name="Dalin E."/>
            <person name="Tice H."/>
            <person name="Pitluck S."/>
            <person name="Chain P."/>
            <person name="Malfatti S."/>
            <person name="Shin M."/>
            <person name="Vergez L."/>
            <person name="Schmutz J."/>
            <person name="Larimer F."/>
            <person name="Land M."/>
            <person name="Hauser L."/>
            <person name="Kyrpides N."/>
            <person name="Lykidis A."/>
            <person name="Tiedje J."/>
            <person name="Richardson P."/>
        </authorList>
    </citation>
    <scope>NUCLEOTIDE SEQUENCE [LARGE SCALE GENOMIC DNA]</scope>
    <source>
        <strain>W3-18-1</strain>
    </source>
</reference>
<gene>
    <name evidence="1" type="primary">secA</name>
    <name type="ordered locus">Sputw3181_0398</name>
</gene>
<organism>
    <name type="scientific">Shewanella sp. (strain W3-18-1)</name>
    <dbReference type="NCBI Taxonomy" id="351745"/>
    <lineage>
        <taxon>Bacteria</taxon>
        <taxon>Pseudomonadati</taxon>
        <taxon>Pseudomonadota</taxon>
        <taxon>Gammaproteobacteria</taxon>
        <taxon>Alteromonadales</taxon>
        <taxon>Shewanellaceae</taxon>
        <taxon>Shewanella</taxon>
    </lineage>
</organism>
<name>SECA_SHESW</name>
<comment type="function">
    <text evidence="1">Part of the Sec protein translocase complex. Interacts with the SecYEG preprotein conducting channel. Has a central role in coupling the hydrolysis of ATP to the transfer of proteins into and across the cell membrane, serving both as a receptor for the preprotein-SecB complex and as an ATP-driven molecular motor driving the stepwise translocation of polypeptide chains across the membrane.</text>
</comment>
<comment type="catalytic activity">
    <reaction evidence="1">
        <text>ATP + H2O + cellular proteinSide 1 = ADP + phosphate + cellular proteinSide 2.</text>
        <dbReference type="EC" id="7.4.2.8"/>
    </reaction>
</comment>
<comment type="cofactor">
    <cofactor evidence="1">
        <name>Zn(2+)</name>
        <dbReference type="ChEBI" id="CHEBI:29105"/>
    </cofactor>
    <text evidence="1">May bind 1 zinc ion per subunit.</text>
</comment>
<comment type="subunit">
    <text evidence="1">Monomer and homodimer. Part of the essential Sec protein translocation apparatus which comprises SecA, SecYEG and auxiliary proteins SecDF-YajC and YidC.</text>
</comment>
<comment type="subcellular location">
    <subcellularLocation>
        <location evidence="1">Cell inner membrane</location>
        <topology evidence="1">Peripheral membrane protein</topology>
        <orientation evidence="1">Cytoplasmic side</orientation>
    </subcellularLocation>
    <subcellularLocation>
        <location evidence="1">Cytoplasm</location>
    </subcellularLocation>
    <text evidence="1">Distribution is 50-50.</text>
</comment>
<comment type="similarity">
    <text evidence="1">Belongs to the SecA family.</text>
</comment>
<dbReference type="EC" id="7.4.2.8" evidence="1"/>
<dbReference type="EMBL" id="CP000503">
    <property type="protein sequence ID" value="ABM23249.1"/>
    <property type="molecule type" value="Genomic_DNA"/>
</dbReference>
<dbReference type="RefSeq" id="WP_011787791.1">
    <property type="nucleotide sequence ID" value="NC_008750.1"/>
</dbReference>
<dbReference type="SMR" id="A1RF04"/>
<dbReference type="KEGG" id="shw:Sputw3181_0398"/>
<dbReference type="HOGENOM" id="CLU_005314_3_0_6"/>
<dbReference type="Proteomes" id="UP000002597">
    <property type="component" value="Chromosome"/>
</dbReference>
<dbReference type="GO" id="GO:0031522">
    <property type="term" value="C:cell envelope Sec protein transport complex"/>
    <property type="evidence" value="ECO:0007669"/>
    <property type="project" value="TreeGrafter"/>
</dbReference>
<dbReference type="GO" id="GO:0005829">
    <property type="term" value="C:cytosol"/>
    <property type="evidence" value="ECO:0007669"/>
    <property type="project" value="TreeGrafter"/>
</dbReference>
<dbReference type="GO" id="GO:0005886">
    <property type="term" value="C:plasma membrane"/>
    <property type="evidence" value="ECO:0007669"/>
    <property type="project" value="UniProtKB-SubCell"/>
</dbReference>
<dbReference type="GO" id="GO:0005524">
    <property type="term" value="F:ATP binding"/>
    <property type="evidence" value="ECO:0007669"/>
    <property type="project" value="UniProtKB-UniRule"/>
</dbReference>
<dbReference type="GO" id="GO:0046872">
    <property type="term" value="F:metal ion binding"/>
    <property type="evidence" value="ECO:0007669"/>
    <property type="project" value="UniProtKB-KW"/>
</dbReference>
<dbReference type="GO" id="GO:0008564">
    <property type="term" value="F:protein-exporting ATPase activity"/>
    <property type="evidence" value="ECO:0007669"/>
    <property type="project" value="UniProtKB-EC"/>
</dbReference>
<dbReference type="GO" id="GO:0065002">
    <property type="term" value="P:intracellular protein transmembrane transport"/>
    <property type="evidence" value="ECO:0007669"/>
    <property type="project" value="UniProtKB-UniRule"/>
</dbReference>
<dbReference type="GO" id="GO:0017038">
    <property type="term" value="P:protein import"/>
    <property type="evidence" value="ECO:0007669"/>
    <property type="project" value="InterPro"/>
</dbReference>
<dbReference type="GO" id="GO:0006605">
    <property type="term" value="P:protein targeting"/>
    <property type="evidence" value="ECO:0007669"/>
    <property type="project" value="UniProtKB-UniRule"/>
</dbReference>
<dbReference type="GO" id="GO:0043952">
    <property type="term" value="P:protein transport by the Sec complex"/>
    <property type="evidence" value="ECO:0007669"/>
    <property type="project" value="TreeGrafter"/>
</dbReference>
<dbReference type="CDD" id="cd17928">
    <property type="entry name" value="DEXDc_SecA"/>
    <property type="match status" value="1"/>
</dbReference>
<dbReference type="CDD" id="cd18803">
    <property type="entry name" value="SF2_C_secA"/>
    <property type="match status" value="1"/>
</dbReference>
<dbReference type="FunFam" id="1.10.3060.10:FF:000001">
    <property type="entry name" value="Preprotein translocase subunit SecA"/>
    <property type="match status" value="1"/>
</dbReference>
<dbReference type="FunFam" id="3.40.50.300:FF:000081">
    <property type="entry name" value="Preprotein translocase subunit SecA"/>
    <property type="match status" value="1"/>
</dbReference>
<dbReference type="FunFam" id="3.40.50.300:FF:000113">
    <property type="entry name" value="Preprotein translocase subunit SecA"/>
    <property type="match status" value="1"/>
</dbReference>
<dbReference type="FunFam" id="3.90.1440.10:FF:000001">
    <property type="entry name" value="Preprotein translocase subunit SecA"/>
    <property type="match status" value="1"/>
</dbReference>
<dbReference type="Gene3D" id="1.10.3060.10">
    <property type="entry name" value="Helical scaffold and wing domains of SecA"/>
    <property type="match status" value="1"/>
</dbReference>
<dbReference type="Gene3D" id="3.40.50.300">
    <property type="entry name" value="P-loop containing nucleotide triphosphate hydrolases"/>
    <property type="match status" value="2"/>
</dbReference>
<dbReference type="Gene3D" id="3.90.1440.10">
    <property type="entry name" value="SecA, preprotein cross-linking domain"/>
    <property type="match status" value="1"/>
</dbReference>
<dbReference type="HAMAP" id="MF_01382">
    <property type="entry name" value="SecA"/>
    <property type="match status" value="1"/>
</dbReference>
<dbReference type="InterPro" id="IPR014001">
    <property type="entry name" value="Helicase_ATP-bd"/>
</dbReference>
<dbReference type="InterPro" id="IPR001650">
    <property type="entry name" value="Helicase_C-like"/>
</dbReference>
<dbReference type="InterPro" id="IPR027417">
    <property type="entry name" value="P-loop_NTPase"/>
</dbReference>
<dbReference type="InterPro" id="IPR004027">
    <property type="entry name" value="SEC_C_motif"/>
</dbReference>
<dbReference type="InterPro" id="IPR000185">
    <property type="entry name" value="SecA"/>
</dbReference>
<dbReference type="InterPro" id="IPR020937">
    <property type="entry name" value="SecA_CS"/>
</dbReference>
<dbReference type="InterPro" id="IPR011115">
    <property type="entry name" value="SecA_DEAD"/>
</dbReference>
<dbReference type="InterPro" id="IPR014018">
    <property type="entry name" value="SecA_motor_DEAD"/>
</dbReference>
<dbReference type="InterPro" id="IPR011130">
    <property type="entry name" value="SecA_preprotein_X-link_dom"/>
</dbReference>
<dbReference type="InterPro" id="IPR044722">
    <property type="entry name" value="SecA_SF2_C"/>
</dbReference>
<dbReference type="InterPro" id="IPR011116">
    <property type="entry name" value="SecA_Wing/Scaffold"/>
</dbReference>
<dbReference type="InterPro" id="IPR036266">
    <property type="entry name" value="SecA_Wing/Scaffold_sf"/>
</dbReference>
<dbReference type="InterPro" id="IPR036670">
    <property type="entry name" value="SecA_X-link_sf"/>
</dbReference>
<dbReference type="NCBIfam" id="NF009538">
    <property type="entry name" value="PRK12904.1"/>
    <property type="match status" value="1"/>
</dbReference>
<dbReference type="NCBIfam" id="TIGR00963">
    <property type="entry name" value="secA"/>
    <property type="match status" value="1"/>
</dbReference>
<dbReference type="PANTHER" id="PTHR30612:SF0">
    <property type="entry name" value="CHLOROPLAST PROTEIN-TRANSPORTING ATPASE"/>
    <property type="match status" value="1"/>
</dbReference>
<dbReference type="PANTHER" id="PTHR30612">
    <property type="entry name" value="SECA INNER MEMBRANE COMPONENT OF SEC PROTEIN SECRETION SYSTEM"/>
    <property type="match status" value="1"/>
</dbReference>
<dbReference type="Pfam" id="PF21090">
    <property type="entry name" value="P-loop_SecA"/>
    <property type="match status" value="1"/>
</dbReference>
<dbReference type="Pfam" id="PF02810">
    <property type="entry name" value="SEC-C"/>
    <property type="match status" value="1"/>
</dbReference>
<dbReference type="Pfam" id="PF07517">
    <property type="entry name" value="SecA_DEAD"/>
    <property type="match status" value="1"/>
</dbReference>
<dbReference type="Pfam" id="PF01043">
    <property type="entry name" value="SecA_PP_bind"/>
    <property type="match status" value="1"/>
</dbReference>
<dbReference type="Pfam" id="PF07516">
    <property type="entry name" value="SecA_SW"/>
    <property type="match status" value="1"/>
</dbReference>
<dbReference type="PRINTS" id="PR00906">
    <property type="entry name" value="SECA"/>
</dbReference>
<dbReference type="SMART" id="SM00957">
    <property type="entry name" value="SecA_DEAD"/>
    <property type="match status" value="1"/>
</dbReference>
<dbReference type="SMART" id="SM00958">
    <property type="entry name" value="SecA_PP_bind"/>
    <property type="match status" value="1"/>
</dbReference>
<dbReference type="SUPFAM" id="SSF81886">
    <property type="entry name" value="Helical scaffold and wing domains of SecA"/>
    <property type="match status" value="1"/>
</dbReference>
<dbReference type="SUPFAM" id="SSF52540">
    <property type="entry name" value="P-loop containing nucleoside triphosphate hydrolases"/>
    <property type="match status" value="2"/>
</dbReference>
<dbReference type="SUPFAM" id="SSF81767">
    <property type="entry name" value="Pre-protein crosslinking domain of SecA"/>
    <property type="match status" value="1"/>
</dbReference>
<dbReference type="PROSITE" id="PS01312">
    <property type="entry name" value="SECA"/>
    <property type="match status" value="1"/>
</dbReference>
<dbReference type="PROSITE" id="PS51196">
    <property type="entry name" value="SECA_MOTOR_DEAD"/>
    <property type="match status" value="1"/>
</dbReference>
<evidence type="ECO:0000255" key="1">
    <source>
        <dbReference type="HAMAP-Rule" id="MF_01382"/>
    </source>
</evidence>
<evidence type="ECO:0000256" key="2">
    <source>
        <dbReference type="SAM" id="MobiDB-lite"/>
    </source>
</evidence>
<keyword id="KW-0067">ATP-binding</keyword>
<keyword id="KW-0997">Cell inner membrane</keyword>
<keyword id="KW-1003">Cell membrane</keyword>
<keyword id="KW-0963">Cytoplasm</keyword>
<keyword id="KW-0472">Membrane</keyword>
<keyword id="KW-0479">Metal-binding</keyword>
<keyword id="KW-0547">Nucleotide-binding</keyword>
<keyword id="KW-0653">Protein transport</keyword>
<keyword id="KW-1278">Translocase</keyword>
<keyword id="KW-0811">Translocation</keyword>
<keyword id="KW-0813">Transport</keyword>
<keyword id="KW-0862">Zinc</keyword>
<proteinExistence type="inferred from homology"/>
<accession>A1RF04</accession>